<evidence type="ECO:0000250" key="1"/>
<evidence type="ECO:0000255" key="2"/>
<evidence type="ECO:0000256" key="3">
    <source>
        <dbReference type="SAM" id="MobiDB-lite"/>
    </source>
</evidence>
<evidence type="ECO:0000305" key="4"/>
<sequence>MNLINMDSENRVVLNVGGIRHETYKATLKKIPATRLSRLTEALANYDPILNEYFFDRHPGVFAQVLNYYRTGKLHYPTDVCGPLFEEELEFWGLDSNQVEPCCWMTYTQHRDTQETLAVLDRLDLDTEKPSEEELARKFGFEEDYYKGTISWWQEMKPRIWSLFDEPYSSNAAKTIGVVSVFFICISILSFCLKTHPDMRVPIVRNITVKTANGSNGWFLDKTQTNAHIAFFYIECVCNAWFTFEILVRFISSPNKWEFIKSSVNIIDYIATLSFYIDLVLQRFASHLENADILEFFSIIRIMRLFKLTRHSSGLKILIQTFRASAKELTLLVFFLVLGIVIFASLVYYAERIQPNPHNDFNSIPLGLWWALVTMTTVGYGDMAPKTYIGMFVGALCALAGVLTIALPVPVIVSNFAMYYSHTQARAKLPKKRRRVLPVEQPRQPRLPGAPGGVSGCGTPGSGPHSGPMGSGGTGPRRMNNKTKDLVSPKSDMAFSFD</sequence>
<keyword id="KW-0325">Glycoprotein</keyword>
<keyword id="KW-0407">Ion channel</keyword>
<keyword id="KW-0406">Ion transport</keyword>
<keyword id="KW-0472">Membrane</keyword>
<keyword id="KW-0630">Potassium</keyword>
<keyword id="KW-0631">Potassium channel</keyword>
<keyword id="KW-0633">Potassium transport</keyword>
<keyword id="KW-1185">Reference proteome</keyword>
<keyword id="KW-0812">Transmembrane</keyword>
<keyword id="KW-1133">Transmembrane helix</keyword>
<keyword id="KW-0813">Transport</keyword>
<keyword id="KW-0851">Voltage-gated channel</keyword>
<name>KCNAW_DROME</name>
<comment type="function">
    <text>Mediates the voltage-dependent potassium ion permeability of excitable membranes. Assuming opened or closed conformations in response to the voltage difference across the membrane, the protein forms a potassium-selective channel through which potassium ions may pass in accordance with their electrochemical gradient.</text>
</comment>
<comment type="subunit">
    <text evidence="1">Heterotetramer of potassium channel proteins.</text>
</comment>
<comment type="subcellular location">
    <subcellularLocation>
        <location>Membrane</location>
        <topology>Multi-pass membrane protein</topology>
    </subcellularLocation>
</comment>
<comment type="miscellaneous">
    <text>The segment S4 is probably the voltage-sensor and is characterized by a series of positively charged amino acids at every third position.</text>
</comment>
<comment type="miscellaneous">
    <text>This channel protein belongs to the delayed rectifier class.</text>
</comment>
<comment type="similarity">
    <text evidence="4">Belongs to the potassium channel family. C (Shaw) (TC 1.A.1.2) subfamily. Shaw sub-subfamily.</text>
</comment>
<proteinExistence type="evidence at transcript level"/>
<protein>
    <recommendedName>
        <fullName>Potassium voltage-gated channel protein Shaw</fullName>
    </recommendedName>
    <alternativeName>
        <fullName>Shaw2</fullName>
    </alternativeName>
</protein>
<reference key="1">
    <citation type="journal article" date="1990" name="Science">
        <title>K+ current diversity is produced by an extended gene family conserved in Drosophila and mouse.</title>
        <authorList>
            <person name="Wei A.G."/>
            <person name="Covarrubias M."/>
            <person name="Butler A."/>
            <person name="Baker K."/>
            <person name="Pak M."/>
            <person name="Salkoff L."/>
        </authorList>
    </citation>
    <scope>NUCLEOTIDE SEQUENCE [MRNA]</scope>
</reference>
<reference key="2">
    <citation type="journal article" date="1990" name="Nucleic Acids Res.">
        <title>Shal, Shab, and Shaw: three genes encoding potassium channels in Drosophila.</title>
        <authorList>
            <person name="Butler A."/>
            <person name="Wei A."/>
            <person name="Baker K."/>
            <person name="Salkoff L."/>
        </authorList>
    </citation>
    <scope>NUCLEOTIDE SEQUENCE [MRNA]</scope>
</reference>
<reference key="3">
    <citation type="journal article" date="2000" name="Science">
        <title>The genome sequence of Drosophila melanogaster.</title>
        <authorList>
            <person name="Adams M.D."/>
            <person name="Celniker S.E."/>
            <person name="Holt R.A."/>
            <person name="Evans C.A."/>
            <person name="Gocayne J.D."/>
            <person name="Amanatides P.G."/>
            <person name="Scherer S.E."/>
            <person name="Li P.W."/>
            <person name="Hoskins R.A."/>
            <person name="Galle R.F."/>
            <person name="George R.A."/>
            <person name="Lewis S.E."/>
            <person name="Richards S."/>
            <person name="Ashburner M."/>
            <person name="Henderson S.N."/>
            <person name="Sutton G.G."/>
            <person name="Wortman J.R."/>
            <person name="Yandell M.D."/>
            <person name="Zhang Q."/>
            <person name="Chen L.X."/>
            <person name="Brandon R.C."/>
            <person name="Rogers Y.-H.C."/>
            <person name="Blazej R.G."/>
            <person name="Champe M."/>
            <person name="Pfeiffer B.D."/>
            <person name="Wan K.H."/>
            <person name="Doyle C."/>
            <person name="Baxter E.G."/>
            <person name="Helt G."/>
            <person name="Nelson C.R."/>
            <person name="Miklos G.L.G."/>
            <person name="Abril J.F."/>
            <person name="Agbayani A."/>
            <person name="An H.-J."/>
            <person name="Andrews-Pfannkoch C."/>
            <person name="Baldwin D."/>
            <person name="Ballew R.M."/>
            <person name="Basu A."/>
            <person name="Baxendale J."/>
            <person name="Bayraktaroglu L."/>
            <person name="Beasley E.M."/>
            <person name="Beeson K.Y."/>
            <person name="Benos P.V."/>
            <person name="Berman B.P."/>
            <person name="Bhandari D."/>
            <person name="Bolshakov S."/>
            <person name="Borkova D."/>
            <person name="Botchan M.R."/>
            <person name="Bouck J."/>
            <person name="Brokstein P."/>
            <person name="Brottier P."/>
            <person name="Burtis K.C."/>
            <person name="Busam D.A."/>
            <person name="Butler H."/>
            <person name="Cadieu E."/>
            <person name="Center A."/>
            <person name="Chandra I."/>
            <person name="Cherry J.M."/>
            <person name="Cawley S."/>
            <person name="Dahlke C."/>
            <person name="Davenport L.B."/>
            <person name="Davies P."/>
            <person name="de Pablos B."/>
            <person name="Delcher A."/>
            <person name="Deng Z."/>
            <person name="Mays A.D."/>
            <person name="Dew I."/>
            <person name="Dietz S.M."/>
            <person name="Dodson K."/>
            <person name="Doup L.E."/>
            <person name="Downes M."/>
            <person name="Dugan-Rocha S."/>
            <person name="Dunkov B.C."/>
            <person name="Dunn P."/>
            <person name="Durbin K.J."/>
            <person name="Evangelista C.C."/>
            <person name="Ferraz C."/>
            <person name="Ferriera S."/>
            <person name="Fleischmann W."/>
            <person name="Fosler C."/>
            <person name="Gabrielian A.E."/>
            <person name="Garg N.S."/>
            <person name="Gelbart W.M."/>
            <person name="Glasser K."/>
            <person name="Glodek A."/>
            <person name="Gong F."/>
            <person name="Gorrell J.H."/>
            <person name="Gu Z."/>
            <person name="Guan P."/>
            <person name="Harris M."/>
            <person name="Harris N.L."/>
            <person name="Harvey D.A."/>
            <person name="Heiman T.J."/>
            <person name="Hernandez J.R."/>
            <person name="Houck J."/>
            <person name="Hostin D."/>
            <person name="Houston K.A."/>
            <person name="Howland T.J."/>
            <person name="Wei M.-H."/>
            <person name="Ibegwam C."/>
            <person name="Jalali M."/>
            <person name="Kalush F."/>
            <person name="Karpen G.H."/>
            <person name="Ke Z."/>
            <person name="Kennison J.A."/>
            <person name="Ketchum K.A."/>
            <person name="Kimmel B.E."/>
            <person name="Kodira C.D."/>
            <person name="Kraft C.L."/>
            <person name="Kravitz S."/>
            <person name="Kulp D."/>
            <person name="Lai Z."/>
            <person name="Lasko P."/>
            <person name="Lei Y."/>
            <person name="Levitsky A.A."/>
            <person name="Li J.H."/>
            <person name="Li Z."/>
            <person name="Liang Y."/>
            <person name="Lin X."/>
            <person name="Liu X."/>
            <person name="Mattei B."/>
            <person name="McIntosh T.C."/>
            <person name="McLeod M.P."/>
            <person name="McPherson D."/>
            <person name="Merkulov G."/>
            <person name="Milshina N.V."/>
            <person name="Mobarry C."/>
            <person name="Morris J."/>
            <person name="Moshrefi A."/>
            <person name="Mount S.M."/>
            <person name="Moy M."/>
            <person name="Murphy B."/>
            <person name="Murphy L."/>
            <person name="Muzny D.M."/>
            <person name="Nelson D.L."/>
            <person name="Nelson D.R."/>
            <person name="Nelson K.A."/>
            <person name="Nixon K."/>
            <person name="Nusskern D.R."/>
            <person name="Pacleb J.M."/>
            <person name="Palazzolo M."/>
            <person name="Pittman G.S."/>
            <person name="Pan S."/>
            <person name="Pollard J."/>
            <person name="Puri V."/>
            <person name="Reese M.G."/>
            <person name="Reinert K."/>
            <person name="Remington K."/>
            <person name="Saunders R.D.C."/>
            <person name="Scheeler F."/>
            <person name="Shen H."/>
            <person name="Shue B.C."/>
            <person name="Siden-Kiamos I."/>
            <person name="Simpson M."/>
            <person name="Skupski M.P."/>
            <person name="Smith T.J."/>
            <person name="Spier E."/>
            <person name="Spradling A.C."/>
            <person name="Stapleton M."/>
            <person name="Strong R."/>
            <person name="Sun E."/>
            <person name="Svirskas R."/>
            <person name="Tector C."/>
            <person name="Turner R."/>
            <person name="Venter E."/>
            <person name="Wang A.H."/>
            <person name="Wang X."/>
            <person name="Wang Z.-Y."/>
            <person name="Wassarman D.A."/>
            <person name="Weinstock G.M."/>
            <person name="Weissenbach J."/>
            <person name="Williams S.M."/>
            <person name="Woodage T."/>
            <person name="Worley K.C."/>
            <person name="Wu D."/>
            <person name="Yang S."/>
            <person name="Yao Q.A."/>
            <person name="Ye J."/>
            <person name="Yeh R.-F."/>
            <person name="Zaveri J.S."/>
            <person name="Zhan M."/>
            <person name="Zhang G."/>
            <person name="Zhao Q."/>
            <person name="Zheng L."/>
            <person name="Zheng X.H."/>
            <person name="Zhong F.N."/>
            <person name="Zhong W."/>
            <person name="Zhou X."/>
            <person name="Zhu S.C."/>
            <person name="Zhu X."/>
            <person name="Smith H.O."/>
            <person name="Gibbs R.A."/>
            <person name="Myers E.W."/>
            <person name="Rubin G.M."/>
            <person name="Venter J.C."/>
        </authorList>
    </citation>
    <scope>NUCLEOTIDE SEQUENCE [LARGE SCALE GENOMIC DNA]</scope>
    <source>
        <strain>Berkeley</strain>
    </source>
</reference>
<reference key="4">
    <citation type="journal article" date="2002" name="Genome Biol.">
        <title>Annotation of the Drosophila melanogaster euchromatic genome: a systematic review.</title>
        <authorList>
            <person name="Misra S."/>
            <person name="Crosby M.A."/>
            <person name="Mungall C.J."/>
            <person name="Matthews B.B."/>
            <person name="Campbell K.S."/>
            <person name="Hradecky P."/>
            <person name="Huang Y."/>
            <person name="Kaminker J.S."/>
            <person name="Millburn G.H."/>
            <person name="Prochnik S.E."/>
            <person name="Smith C.D."/>
            <person name="Tupy J.L."/>
            <person name="Whitfield E.J."/>
            <person name="Bayraktaroglu L."/>
            <person name="Berman B.P."/>
            <person name="Bettencourt B.R."/>
            <person name="Celniker S.E."/>
            <person name="de Grey A.D.N.J."/>
            <person name="Drysdale R.A."/>
            <person name="Harris N.L."/>
            <person name="Richter J."/>
            <person name="Russo S."/>
            <person name="Schroeder A.J."/>
            <person name="Shu S.Q."/>
            <person name="Stapleton M."/>
            <person name="Yamada C."/>
            <person name="Ashburner M."/>
            <person name="Gelbart W.M."/>
            <person name="Rubin G.M."/>
            <person name="Lewis S.E."/>
        </authorList>
    </citation>
    <scope>GENOME REANNOTATION</scope>
    <source>
        <strain>Berkeley</strain>
    </source>
</reference>
<organism>
    <name type="scientific">Drosophila melanogaster</name>
    <name type="common">Fruit fly</name>
    <dbReference type="NCBI Taxonomy" id="7227"/>
    <lineage>
        <taxon>Eukaryota</taxon>
        <taxon>Metazoa</taxon>
        <taxon>Ecdysozoa</taxon>
        <taxon>Arthropoda</taxon>
        <taxon>Hexapoda</taxon>
        <taxon>Insecta</taxon>
        <taxon>Pterygota</taxon>
        <taxon>Neoptera</taxon>
        <taxon>Endopterygota</taxon>
        <taxon>Diptera</taxon>
        <taxon>Brachycera</taxon>
        <taxon>Muscomorpha</taxon>
        <taxon>Ephydroidea</taxon>
        <taxon>Drosophilidae</taxon>
        <taxon>Drosophila</taxon>
        <taxon>Sophophora</taxon>
    </lineage>
</organism>
<dbReference type="EMBL" id="M32661">
    <property type="protein sequence ID" value="AAA28897.1"/>
    <property type="molecule type" value="mRNA"/>
</dbReference>
<dbReference type="EMBL" id="AE014134">
    <property type="protein sequence ID" value="AAF51069.1"/>
    <property type="molecule type" value="Genomic_DNA"/>
</dbReference>
<dbReference type="PIR" id="A41359">
    <property type="entry name" value="A41359"/>
</dbReference>
<dbReference type="RefSeq" id="NP_476721.1">
    <property type="nucleotide sequence ID" value="NM_057373.3"/>
</dbReference>
<dbReference type="SMR" id="P17972"/>
<dbReference type="BioGRID" id="59803">
    <property type="interactions" value="2"/>
</dbReference>
<dbReference type="FunCoup" id="P17972">
    <property type="interactions" value="171"/>
</dbReference>
<dbReference type="STRING" id="7227.FBpp0288427"/>
<dbReference type="TCDB" id="1.A.1.2.2">
    <property type="family name" value="the voltage-gated ion channel (vic) superfamily"/>
</dbReference>
<dbReference type="GlyCosmos" id="P17972">
    <property type="glycosylation" value="3 sites, No reported glycans"/>
</dbReference>
<dbReference type="GlyGen" id="P17972">
    <property type="glycosylation" value="3 sites"/>
</dbReference>
<dbReference type="PaxDb" id="7227-FBpp0288427"/>
<dbReference type="DNASU" id="33599"/>
<dbReference type="EnsemblMetazoa" id="FBtr0089274">
    <property type="protein sequence ID" value="FBpp0088331"/>
    <property type="gene ID" value="FBgn0003386"/>
</dbReference>
<dbReference type="GeneID" id="33599"/>
<dbReference type="KEGG" id="dme:Dmel_CG2822"/>
<dbReference type="AGR" id="FB:FBgn0003386"/>
<dbReference type="CTD" id="33599"/>
<dbReference type="FlyBase" id="FBgn0003386">
    <property type="gene designation" value="Shaw"/>
</dbReference>
<dbReference type="VEuPathDB" id="VectorBase:FBgn0003386"/>
<dbReference type="eggNOG" id="KOG3713">
    <property type="taxonomic scope" value="Eukaryota"/>
</dbReference>
<dbReference type="HOGENOM" id="CLU_011722_4_3_1"/>
<dbReference type="InParanoid" id="P17972"/>
<dbReference type="OrthoDB" id="415460at2759"/>
<dbReference type="PhylomeDB" id="P17972"/>
<dbReference type="Reactome" id="R-DME-1296072">
    <property type="pathway name" value="Voltage gated Potassium channels"/>
</dbReference>
<dbReference type="Reactome" id="R-DME-381676">
    <property type="pathway name" value="Glucagon-like Peptide-1 (GLP1) regulates insulin secretion"/>
</dbReference>
<dbReference type="BioGRID-ORCS" id="33599">
    <property type="hits" value="0 hits in 3 CRISPR screens"/>
</dbReference>
<dbReference type="GenomeRNAi" id="33599"/>
<dbReference type="PRO" id="PR:P17972"/>
<dbReference type="Proteomes" id="UP000000803">
    <property type="component" value="Chromosome 2L"/>
</dbReference>
<dbReference type="Bgee" id="FBgn0003386">
    <property type="expression patterns" value="Expressed in visceral muscle cell in digestive tract and 164 other cell types or tissues"/>
</dbReference>
<dbReference type="ExpressionAtlas" id="P17972">
    <property type="expression patterns" value="baseline and differential"/>
</dbReference>
<dbReference type="GO" id="GO:0043679">
    <property type="term" value="C:axon terminus"/>
    <property type="evidence" value="ECO:0000318"/>
    <property type="project" value="GO_Central"/>
</dbReference>
<dbReference type="GO" id="GO:0032590">
    <property type="term" value="C:dendrite membrane"/>
    <property type="evidence" value="ECO:0000318"/>
    <property type="project" value="GO_Central"/>
</dbReference>
<dbReference type="GO" id="GO:0032809">
    <property type="term" value="C:neuronal cell body membrane"/>
    <property type="evidence" value="ECO:0000318"/>
    <property type="project" value="GO_Central"/>
</dbReference>
<dbReference type="GO" id="GO:0005886">
    <property type="term" value="C:plasma membrane"/>
    <property type="evidence" value="ECO:0000250"/>
    <property type="project" value="FlyBase"/>
</dbReference>
<dbReference type="GO" id="GO:0045211">
    <property type="term" value="C:postsynaptic membrane"/>
    <property type="evidence" value="ECO:0000318"/>
    <property type="project" value="GO_Central"/>
</dbReference>
<dbReference type="GO" id="GO:0042734">
    <property type="term" value="C:presynaptic membrane"/>
    <property type="evidence" value="ECO:0000318"/>
    <property type="project" value="GO_Central"/>
</dbReference>
<dbReference type="GO" id="GO:0008076">
    <property type="term" value="C:voltage-gated potassium channel complex"/>
    <property type="evidence" value="ECO:0000250"/>
    <property type="project" value="FlyBase"/>
</dbReference>
<dbReference type="GO" id="GO:0005251">
    <property type="term" value="F:delayed rectifier potassium channel activity"/>
    <property type="evidence" value="ECO:0000318"/>
    <property type="project" value="GO_Central"/>
</dbReference>
<dbReference type="GO" id="GO:0022843">
    <property type="term" value="F:voltage-gated monoatomic cation channel activity"/>
    <property type="evidence" value="ECO:0000250"/>
    <property type="project" value="FlyBase"/>
</dbReference>
<dbReference type="GO" id="GO:0005249">
    <property type="term" value="F:voltage-gated potassium channel activity"/>
    <property type="evidence" value="ECO:0000304"/>
    <property type="project" value="FlyBase"/>
</dbReference>
<dbReference type="GO" id="GO:0001508">
    <property type="term" value="P:action potential"/>
    <property type="evidence" value="ECO:0000318"/>
    <property type="project" value="GO_Central"/>
</dbReference>
<dbReference type="GO" id="GO:0071805">
    <property type="term" value="P:potassium ion transmembrane transport"/>
    <property type="evidence" value="ECO:0000318"/>
    <property type="project" value="GO_Central"/>
</dbReference>
<dbReference type="GO" id="GO:0006813">
    <property type="term" value="P:potassium ion transport"/>
    <property type="evidence" value="ECO:0000250"/>
    <property type="project" value="FlyBase"/>
</dbReference>
<dbReference type="GO" id="GO:0051260">
    <property type="term" value="P:protein homooligomerization"/>
    <property type="evidence" value="ECO:0007669"/>
    <property type="project" value="InterPro"/>
</dbReference>
<dbReference type="GO" id="GO:0030431">
    <property type="term" value="P:sleep"/>
    <property type="evidence" value="ECO:0000315"/>
    <property type="project" value="FlyBase"/>
</dbReference>
<dbReference type="CDD" id="cd18416">
    <property type="entry name" value="BTB_Shaw-like"/>
    <property type="match status" value="1"/>
</dbReference>
<dbReference type="FunFam" id="3.30.710.10:FF:000020">
    <property type="entry name" value="Potassium voltage-gated channel protein Shaw"/>
    <property type="match status" value="1"/>
</dbReference>
<dbReference type="FunFam" id="1.10.287.70:FF:000002">
    <property type="entry name" value="Potassium voltage-gated channel subfamily a member"/>
    <property type="match status" value="1"/>
</dbReference>
<dbReference type="FunFam" id="1.20.120.350:FF:000047">
    <property type="entry name" value="Uncharacterized protein, isoform C"/>
    <property type="match status" value="1"/>
</dbReference>
<dbReference type="Gene3D" id="1.10.287.70">
    <property type="match status" value="1"/>
</dbReference>
<dbReference type="Gene3D" id="3.30.710.10">
    <property type="entry name" value="Potassium Channel Kv1.1, Chain A"/>
    <property type="match status" value="1"/>
</dbReference>
<dbReference type="Gene3D" id="1.20.120.350">
    <property type="entry name" value="Voltage-gated potassium channels. Chain C"/>
    <property type="match status" value="1"/>
</dbReference>
<dbReference type="InterPro" id="IPR000210">
    <property type="entry name" value="BTB/POZ_dom"/>
</dbReference>
<dbReference type="InterPro" id="IPR005821">
    <property type="entry name" value="Ion_trans_dom"/>
</dbReference>
<dbReference type="InterPro" id="IPR003968">
    <property type="entry name" value="K_chnl_volt-dep_Kv"/>
</dbReference>
<dbReference type="InterPro" id="IPR003974">
    <property type="entry name" value="K_chnl_volt-dep_Kv3"/>
</dbReference>
<dbReference type="InterPro" id="IPR011333">
    <property type="entry name" value="SKP1/BTB/POZ_sf"/>
</dbReference>
<dbReference type="InterPro" id="IPR003131">
    <property type="entry name" value="T1-type_BTB"/>
</dbReference>
<dbReference type="InterPro" id="IPR028325">
    <property type="entry name" value="VG_K_chnl"/>
</dbReference>
<dbReference type="InterPro" id="IPR027359">
    <property type="entry name" value="Volt_channel_dom_sf"/>
</dbReference>
<dbReference type="PANTHER" id="PTHR11537:SF252">
    <property type="entry name" value="POTASSIUM VOLTAGE-GATED CHANNEL PROTEIN SHAW"/>
    <property type="match status" value="1"/>
</dbReference>
<dbReference type="PANTHER" id="PTHR11537">
    <property type="entry name" value="VOLTAGE-GATED POTASSIUM CHANNEL"/>
    <property type="match status" value="1"/>
</dbReference>
<dbReference type="Pfam" id="PF02214">
    <property type="entry name" value="BTB_2"/>
    <property type="match status" value="1"/>
</dbReference>
<dbReference type="Pfam" id="PF00520">
    <property type="entry name" value="Ion_trans"/>
    <property type="match status" value="1"/>
</dbReference>
<dbReference type="PRINTS" id="PR00169">
    <property type="entry name" value="KCHANNEL"/>
</dbReference>
<dbReference type="PRINTS" id="PR01491">
    <property type="entry name" value="KVCHANNEL"/>
</dbReference>
<dbReference type="PRINTS" id="PR01498">
    <property type="entry name" value="SHAWCHANNEL"/>
</dbReference>
<dbReference type="SMART" id="SM00225">
    <property type="entry name" value="BTB"/>
    <property type="match status" value="1"/>
</dbReference>
<dbReference type="SUPFAM" id="SSF54695">
    <property type="entry name" value="POZ domain"/>
    <property type="match status" value="1"/>
</dbReference>
<dbReference type="SUPFAM" id="SSF81324">
    <property type="entry name" value="Voltage-gated potassium channels"/>
    <property type="match status" value="1"/>
</dbReference>
<feature type="chain" id="PRO_0000053967" description="Potassium voltage-gated channel protein Shaw">
    <location>
        <begin position="1"/>
        <end position="498"/>
    </location>
</feature>
<feature type="transmembrane region" description="Helical; Name=Segment S1" evidence="2">
    <location>
        <begin position="175"/>
        <end position="193"/>
    </location>
</feature>
<feature type="transmembrane region" description="Helical; Name=Segment S2" evidence="2">
    <location>
        <begin position="230"/>
        <end position="252"/>
    </location>
</feature>
<feature type="transmembrane region" description="Helical; Name=Segment S3" evidence="2">
    <location>
        <begin position="263"/>
        <end position="284"/>
    </location>
</feature>
<feature type="transmembrane region" description="Helical; Voltage-sensor; Name=Segment S4" evidence="2">
    <location>
        <begin position="292"/>
        <end position="313"/>
    </location>
</feature>
<feature type="transmembrane region" description="Helical; Name=Segment S5" evidence="2">
    <location>
        <begin position="329"/>
        <end position="350"/>
    </location>
</feature>
<feature type="transmembrane region" description="Helical; Name=Segment S6" evidence="2">
    <location>
        <begin position="392"/>
        <end position="413"/>
    </location>
</feature>
<feature type="region of interest" description="Disordered" evidence="3">
    <location>
        <begin position="431"/>
        <end position="498"/>
    </location>
</feature>
<feature type="short sequence motif" description="Selectivity filter" evidence="1">
    <location>
        <begin position="377"/>
        <end position="382"/>
    </location>
</feature>
<feature type="compositionally biased region" description="Gly residues" evidence="3">
    <location>
        <begin position="450"/>
        <end position="461"/>
    </location>
</feature>
<feature type="glycosylation site" description="N-linked (GlcNAc...) asparagine" evidence="2">
    <location>
        <position position="206"/>
    </location>
</feature>
<feature type="glycosylation site" description="N-linked (GlcNAc...) asparagine" evidence="2">
    <location>
        <position position="213"/>
    </location>
</feature>
<feature type="glycosylation site" description="N-linked (GlcNAc...) asparagine" evidence="2">
    <location>
        <position position="481"/>
    </location>
</feature>
<accession>P17972</accession>
<accession>Q9VQU5</accession>
<gene>
    <name type="primary">Shaw</name>
    <name type="synonym">SHAW2</name>
    <name type="ORF">CG2822</name>
</gene>